<name>ARFP1_RAT</name>
<feature type="initiator methionine" description="Removed" evidence="1">
    <location>
        <position position="1"/>
    </location>
</feature>
<feature type="chain" id="PRO_0000064666" description="Arfaptin-1">
    <location>
        <begin position="2"/>
        <end position="366"/>
    </location>
</feature>
<feature type="domain" description="AH" evidence="2">
    <location>
        <begin position="146"/>
        <end position="346"/>
    </location>
</feature>
<feature type="region of interest" description="Disordered" evidence="3">
    <location>
        <begin position="1"/>
        <end position="78"/>
    </location>
</feature>
<feature type="compositionally biased region" description="Basic and acidic residues" evidence="3">
    <location>
        <begin position="22"/>
        <end position="35"/>
    </location>
</feature>
<feature type="compositionally biased region" description="Polar residues" evidence="3">
    <location>
        <begin position="44"/>
        <end position="53"/>
    </location>
</feature>
<feature type="modified residue" description="N-acetylalanine" evidence="1">
    <location>
        <position position="2"/>
    </location>
</feature>
<feature type="modified residue" description="Phosphoserine" evidence="1">
    <location>
        <position position="5"/>
    </location>
</feature>
<feature type="modified residue" description="Phosphoserine" evidence="1">
    <location>
        <position position="36"/>
    </location>
</feature>
<feature type="modified residue" description="Phosphoserine" evidence="5">
    <location>
        <position position="39"/>
    </location>
</feature>
<feature type="modified residue" description="Phosphoserine" evidence="1">
    <location>
        <position position="69"/>
    </location>
</feature>
<feature type="modified residue" description="Phosphoserine" evidence="1">
    <location>
        <position position="79"/>
    </location>
</feature>
<feature type="modified residue" description="Phosphoserine" evidence="1">
    <location>
        <position position="125"/>
    </location>
</feature>
<feature type="modified residue" description="Phosphothreonine" evidence="1">
    <location>
        <position position="354"/>
    </location>
</feature>
<dbReference type="EMBL" id="AY004875">
    <property type="protein sequence ID" value="AAF91077.1"/>
    <property type="molecule type" value="mRNA"/>
</dbReference>
<dbReference type="RefSeq" id="NP_068531.1">
    <property type="nucleotide sequence ID" value="NM_021763.2"/>
</dbReference>
<dbReference type="RefSeq" id="XP_063138503.1">
    <property type="nucleotide sequence ID" value="XM_063282433.1"/>
</dbReference>
<dbReference type="RefSeq" id="XP_063138504.1">
    <property type="nucleotide sequence ID" value="XM_063282434.1"/>
</dbReference>
<dbReference type="SMR" id="Q9JHU5"/>
<dbReference type="FunCoup" id="Q9JHU5">
    <property type="interactions" value="3818"/>
</dbReference>
<dbReference type="IntAct" id="Q9JHU5">
    <property type="interactions" value="1"/>
</dbReference>
<dbReference type="STRING" id="10116.ENSRNOP00000070577"/>
<dbReference type="iPTMnet" id="Q9JHU5"/>
<dbReference type="PhosphoSitePlus" id="Q9JHU5"/>
<dbReference type="jPOST" id="Q9JHU5"/>
<dbReference type="PaxDb" id="10116-ENSRNOP00000014236"/>
<dbReference type="PeptideAtlas" id="Q9JHU5"/>
<dbReference type="GeneID" id="60382"/>
<dbReference type="KEGG" id="rno:60382"/>
<dbReference type="UCSC" id="RGD:708401">
    <property type="organism name" value="rat"/>
</dbReference>
<dbReference type="AGR" id="RGD:708401"/>
<dbReference type="CTD" id="27236"/>
<dbReference type="RGD" id="708401">
    <property type="gene designation" value="Arfip1"/>
</dbReference>
<dbReference type="VEuPathDB" id="HostDB:ENSRNOG00000010533"/>
<dbReference type="eggNOG" id="KOG3876">
    <property type="taxonomic scope" value="Eukaryota"/>
</dbReference>
<dbReference type="HOGENOM" id="CLU_047975_2_0_1"/>
<dbReference type="InParanoid" id="Q9JHU5"/>
<dbReference type="OrthoDB" id="9994780at2759"/>
<dbReference type="PhylomeDB" id="Q9JHU5"/>
<dbReference type="PRO" id="PR:Q9JHU5"/>
<dbReference type="Proteomes" id="UP000002494">
    <property type="component" value="Chromosome 2"/>
</dbReference>
<dbReference type="Bgee" id="ENSRNOG00000010533">
    <property type="expression patterns" value="Expressed in duodenum and 19 other cell types or tissues"/>
</dbReference>
<dbReference type="ExpressionAtlas" id="Q9JHU5">
    <property type="expression patterns" value="baseline and differential"/>
</dbReference>
<dbReference type="GO" id="GO:0005829">
    <property type="term" value="C:cytosol"/>
    <property type="evidence" value="ECO:0000266"/>
    <property type="project" value="RGD"/>
</dbReference>
<dbReference type="GO" id="GO:0000139">
    <property type="term" value="C:Golgi membrane"/>
    <property type="evidence" value="ECO:0000266"/>
    <property type="project" value="RGD"/>
</dbReference>
<dbReference type="GO" id="GO:0032588">
    <property type="term" value="C:trans-Golgi network membrane"/>
    <property type="evidence" value="ECO:0000266"/>
    <property type="project" value="RGD"/>
</dbReference>
<dbReference type="GO" id="GO:0070273">
    <property type="term" value="F:phosphatidylinositol-4-phosphate binding"/>
    <property type="evidence" value="ECO:0000266"/>
    <property type="project" value="RGD"/>
</dbReference>
<dbReference type="GO" id="GO:0005543">
    <property type="term" value="F:phospholipid binding"/>
    <property type="evidence" value="ECO:0000318"/>
    <property type="project" value="GO_Central"/>
</dbReference>
<dbReference type="GO" id="GO:0019904">
    <property type="term" value="F:protein domain specific binding"/>
    <property type="evidence" value="ECO:0007669"/>
    <property type="project" value="InterPro"/>
</dbReference>
<dbReference type="GO" id="GO:0006886">
    <property type="term" value="P:intracellular protein transport"/>
    <property type="evidence" value="ECO:0000266"/>
    <property type="project" value="RGD"/>
</dbReference>
<dbReference type="GO" id="GO:1905280">
    <property type="term" value="P:negative regulation of retrograde transport, endosome to Golgi"/>
    <property type="evidence" value="ECO:0000266"/>
    <property type="project" value="RGD"/>
</dbReference>
<dbReference type="GO" id="GO:0034315">
    <property type="term" value="P:regulation of Arp2/3 complex-mediated actin nucleation"/>
    <property type="evidence" value="ECO:0000318"/>
    <property type="project" value="GO_Central"/>
</dbReference>
<dbReference type="GO" id="GO:0050708">
    <property type="term" value="P:regulation of protein secretion"/>
    <property type="evidence" value="ECO:0000266"/>
    <property type="project" value="RGD"/>
</dbReference>
<dbReference type="CDD" id="cd07660">
    <property type="entry name" value="BAR_Arfaptin"/>
    <property type="match status" value="1"/>
</dbReference>
<dbReference type="FunFam" id="1.20.1270.60:FF:000003">
    <property type="entry name" value="arfaptin-2 isoform X1"/>
    <property type="match status" value="1"/>
</dbReference>
<dbReference type="Gene3D" id="1.20.1270.60">
    <property type="entry name" value="Arfaptin homology (AH) domain/BAR domain"/>
    <property type="match status" value="1"/>
</dbReference>
<dbReference type="InterPro" id="IPR027267">
    <property type="entry name" value="AH/BAR_dom_sf"/>
</dbReference>
<dbReference type="InterPro" id="IPR010504">
    <property type="entry name" value="AH_dom"/>
</dbReference>
<dbReference type="InterPro" id="IPR030798">
    <property type="entry name" value="Arfaptin_fam"/>
</dbReference>
<dbReference type="PANTHER" id="PTHR12141:SF4">
    <property type="entry name" value="ARFAPTIN-1"/>
    <property type="match status" value="1"/>
</dbReference>
<dbReference type="PANTHER" id="PTHR12141">
    <property type="entry name" value="ARFAPTIN-RELATED"/>
    <property type="match status" value="1"/>
</dbReference>
<dbReference type="Pfam" id="PF06456">
    <property type="entry name" value="Arfaptin"/>
    <property type="match status" value="1"/>
</dbReference>
<dbReference type="SMART" id="SM01015">
    <property type="entry name" value="Arfaptin"/>
    <property type="match status" value="1"/>
</dbReference>
<dbReference type="SUPFAM" id="SSF103657">
    <property type="entry name" value="BAR/IMD domain-like"/>
    <property type="match status" value="1"/>
</dbReference>
<dbReference type="PROSITE" id="PS50870">
    <property type="entry name" value="AH"/>
    <property type="match status" value="1"/>
</dbReference>
<keyword id="KW-0007">Acetylation</keyword>
<keyword id="KW-0333">Golgi apparatus</keyword>
<keyword id="KW-0472">Membrane</keyword>
<keyword id="KW-0597">Phosphoprotein</keyword>
<keyword id="KW-1185">Reference proteome</keyword>
<evidence type="ECO:0000250" key="1">
    <source>
        <dbReference type="UniProtKB" id="P53367"/>
    </source>
</evidence>
<evidence type="ECO:0000255" key="2">
    <source>
        <dbReference type="PROSITE-ProRule" id="PRU00294"/>
    </source>
</evidence>
<evidence type="ECO:0000256" key="3">
    <source>
        <dbReference type="SAM" id="MobiDB-lite"/>
    </source>
</evidence>
<evidence type="ECO:0000312" key="4">
    <source>
        <dbReference type="RGD" id="708401"/>
    </source>
</evidence>
<evidence type="ECO:0007744" key="5">
    <source>
    </source>
</evidence>
<gene>
    <name evidence="4" type="primary">Arfip1</name>
</gene>
<accession>Q9JHU5</accession>
<sequence>MAEESPKNSAAEIPVTSNGEVGDAHEHGYNRDLKHSLPSGLGLSETQITSHGFDSTKEGVTEAGASQGSSAPPLPCVLSPSRVAASQLTQHAGGQRTHTKGGPVILADEIKNPAMEKLELVRKWSLNTYKCTRQIISEKLGRGSRTVDLELEAQIDILRDNKKKYENILKLAQTLSTQLFQMVHTQKQLGDAFADLSLKSLELHEEFGYNADTQKLLAKNGETLLGAINFFIASVNTLVNKTIEDTLMTVKQYENARIEYDAYRTDLEELNLGPRDANTLPKIEQSQHLFQIHKEKYDKMRSDVSVKLKFLEENKVKVLRNQLALFHSAVAAYFAGNQKQLEQTLKQFHVKLKTPGVDAPSWLEEQ</sequence>
<reference key="1">
    <citation type="submission" date="2000-07" db="EMBL/GenBank/DDBJ databases">
        <title>Cloning of the rat arfaptin 1.</title>
        <authorList>
            <person name="Laporte S.A."/>
            <person name="Caron M.G."/>
        </authorList>
    </citation>
    <scope>NUCLEOTIDE SEQUENCE [MRNA]</scope>
</reference>
<reference key="2">
    <citation type="journal article" date="2012" name="Nat. Commun.">
        <title>Quantitative maps of protein phosphorylation sites across 14 different rat organs and tissues.</title>
        <authorList>
            <person name="Lundby A."/>
            <person name="Secher A."/>
            <person name="Lage K."/>
            <person name="Nordsborg N.B."/>
            <person name="Dmytriyev A."/>
            <person name="Lundby C."/>
            <person name="Olsen J.V."/>
        </authorList>
    </citation>
    <scope>PHOSPHORYLATION [LARGE SCALE ANALYSIS] AT SER-39</scope>
    <scope>IDENTIFICATION BY MASS SPECTROMETRY [LARGE SCALE ANALYSIS]</scope>
</reference>
<organism>
    <name type="scientific">Rattus norvegicus</name>
    <name type="common">Rat</name>
    <dbReference type="NCBI Taxonomy" id="10116"/>
    <lineage>
        <taxon>Eukaryota</taxon>
        <taxon>Metazoa</taxon>
        <taxon>Chordata</taxon>
        <taxon>Craniata</taxon>
        <taxon>Vertebrata</taxon>
        <taxon>Euteleostomi</taxon>
        <taxon>Mammalia</taxon>
        <taxon>Eutheria</taxon>
        <taxon>Euarchontoglires</taxon>
        <taxon>Glires</taxon>
        <taxon>Rodentia</taxon>
        <taxon>Myomorpha</taxon>
        <taxon>Muroidea</taxon>
        <taxon>Muridae</taxon>
        <taxon>Murinae</taxon>
        <taxon>Rattus</taxon>
    </lineage>
</organism>
<comment type="function">
    <text evidence="1">Plays a role in controlling biogenesis of secretory granules at the trans-Golgi network. Mechanistically, binds ARF-GTP at the neck of a growing secretory granule precursor and forms a protective scaffold. Once the granule precursor has been completely loaded, active PRKD1 phosphorylates ARFIP1 and releases it from ARFs. In turn, ARFs induce fission. Through this mechanism, ensures proper secretory granule formation at the Golgi of pancreatic beta cells.</text>
</comment>
<comment type="subunit">
    <text evidence="1">Forms homodimers or heterodimers with ARFIP2. Interacts with non-myristoylated GTP-bound ARF3, but not to GDP-bound ARF3. Interacts with ARF1. Binds with lower affinity to ARF5 and with very little affinity to ARF6. Interacts with ARL1. Interacts with ATG9A.</text>
</comment>
<comment type="subcellular location">
    <subcellularLocation>
        <location evidence="1">Golgi apparatus</location>
    </subcellularLocation>
    <subcellularLocation>
        <location evidence="1">Golgi apparatus</location>
        <location evidence="1">trans-Golgi network membrane</location>
    </subcellularLocation>
</comment>
<proteinExistence type="evidence at protein level"/>
<protein>
    <recommendedName>
        <fullName evidence="1">Arfaptin-1</fullName>
    </recommendedName>
    <alternativeName>
        <fullName evidence="1">ADP-ribosylation factor-interacting protein 1</fullName>
    </alternativeName>
</protein>